<protein>
    <recommendedName>
        <fullName evidence="1">Deoxyuridine 5'-triphosphate nucleotidohydrolase</fullName>
        <shortName evidence="1">dUTPase</shortName>
        <ecNumber evidence="1">3.6.1.23</ecNumber>
    </recommendedName>
    <alternativeName>
        <fullName evidence="1">dUTP pyrophosphatase</fullName>
    </alternativeName>
</protein>
<feature type="chain" id="PRO_1000094995" description="Deoxyuridine 5'-triphosphate nucleotidohydrolase">
    <location>
        <begin position="1"/>
        <end position="151"/>
    </location>
</feature>
<feature type="binding site" evidence="1">
    <location>
        <begin position="70"/>
        <end position="72"/>
    </location>
    <ligand>
        <name>substrate</name>
    </ligand>
</feature>
<feature type="binding site" evidence="1">
    <location>
        <position position="83"/>
    </location>
    <ligand>
        <name>substrate</name>
    </ligand>
</feature>
<feature type="binding site" evidence="1">
    <location>
        <begin position="87"/>
        <end position="89"/>
    </location>
    <ligand>
        <name>substrate</name>
    </ligand>
</feature>
<feature type="binding site" evidence="1">
    <location>
        <position position="97"/>
    </location>
    <ligand>
        <name>substrate</name>
    </ligand>
</feature>
<evidence type="ECO:0000255" key="1">
    <source>
        <dbReference type="HAMAP-Rule" id="MF_00116"/>
    </source>
</evidence>
<gene>
    <name evidence="1" type="primary">dut</name>
    <name type="ordered locus">SbBS512_E4065</name>
</gene>
<dbReference type="EC" id="3.6.1.23" evidence="1"/>
<dbReference type="EMBL" id="CP001063">
    <property type="protein sequence ID" value="ACD09438.1"/>
    <property type="molecule type" value="Genomic_DNA"/>
</dbReference>
<dbReference type="SMR" id="B2TTV4"/>
<dbReference type="STRING" id="344609.SbBS512_E4065"/>
<dbReference type="KEGG" id="sbc:SbBS512_E4065"/>
<dbReference type="HOGENOM" id="CLU_068508_1_1_6"/>
<dbReference type="UniPathway" id="UPA00610">
    <property type="reaction ID" value="UER00666"/>
</dbReference>
<dbReference type="Proteomes" id="UP000001030">
    <property type="component" value="Chromosome"/>
</dbReference>
<dbReference type="GO" id="GO:0004170">
    <property type="term" value="F:dUTP diphosphatase activity"/>
    <property type="evidence" value="ECO:0007669"/>
    <property type="project" value="UniProtKB-UniRule"/>
</dbReference>
<dbReference type="GO" id="GO:0000287">
    <property type="term" value="F:magnesium ion binding"/>
    <property type="evidence" value="ECO:0007669"/>
    <property type="project" value="UniProtKB-UniRule"/>
</dbReference>
<dbReference type="GO" id="GO:0006226">
    <property type="term" value="P:dUMP biosynthetic process"/>
    <property type="evidence" value="ECO:0007669"/>
    <property type="project" value="UniProtKB-UniRule"/>
</dbReference>
<dbReference type="GO" id="GO:0046081">
    <property type="term" value="P:dUTP catabolic process"/>
    <property type="evidence" value="ECO:0007669"/>
    <property type="project" value="InterPro"/>
</dbReference>
<dbReference type="CDD" id="cd07557">
    <property type="entry name" value="trimeric_dUTPase"/>
    <property type="match status" value="1"/>
</dbReference>
<dbReference type="FunFam" id="2.70.40.10:FF:000002">
    <property type="entry name" value="dUTP diphosphatase"/>
    <property type="match status" value="1"/>
</dbReference>
<dbReference type="Gene3D" id="2.70.40.10">
    <property type="match status" value="1"/>
</dbReference>
<dbReference type="HAMAP" id="MF_00116">
    <property type="entry name" value="dUTPase_bact"/>
    <property type="match status" value="1"/>
</dbReference>
<dbReference type="InterPro" id="IPR008181">
    <property type="entry name" value="dUTPase"/>
</dbReference>
<dbReference type="InterPro" id="IPR029054">
    <property type="entry name" value="dUTPase-like"/>
</dbReference>
<dbReference type="InterPro" id="IPR036157">
    <property type="entry name" value="dUTPase-like_sf"/>
</dbReference>
<dbReference type="InterPro" id="IPR033704">
    <property type="entry name" value="dUTPase_trimeric"/>
</dbReference>
<dbReference type="NCBIfam" id="TIGR00576">
    <property type="entry name" value="dut"/>
    <property type="match status" value="1"/>
</dbReference>
<dbReference type="NCBIfam" id="NF001862">
    <property type="entry name" value="PRK00601.1"/>
    <property type="match status" value="1"/>
</dbReference>
<dbReference type="PANTHER" id="PTHR11241">
    <property type="entry name" value="DEOXYURIDINE 5'-TRIPHOSPHATE NUCLEOTIDOHYDROLASE"/>
    <property type="match status" value="1"/>
</dbReference>
<dbReference type="PANTHER" id="PTHR11241:SF0">
    <property type="entry name" value="DEOXYURIDINE 5'-TRIPHOSPHATE NUCLEOTIDOHYDROLASE"/>
    <property type="match status" value="1"/>
</dbReference>
<dbReference type="Pfam" id="PF00692">
    <property type="entry name" value="dUTPase"/>
    <property type="match status" value="1"/>
</dbReference>
<dbReference type="SUPFAM" id="SSF51283">
    <property type="entry name" value="dUTPase-like"/>
    <property type="match status" value="1"/>
</dbReference>
<comment type="function">
    <text evidence="1">This enzyme is involved in nucleotide metabolism: it produces dUMP, the immediate precursor of thymidine nucleotides and it decreases the intracellular concentration of dUTP so that uracil cannot be incorporated into DNA.</text>
</comment>
<comment type="catalytic activity">
    <reaction evidence="1">
        <text>dUTP + H2O = dUMP + diphosphate + H(+)</text>
        <dbReference type="Rhea" id="RHEA:10248"/>
        <dbReference type="ChEBI" id="CHEBI:15377"/>
        <dbReference type="ChEBI" id="CHEBI:15378"/>
        <dbReference type="ChEBI" id="CHEBI:33019"/>
        <dbReference type="ChEBI" id="CHEBI:61555"/>
        <dbReference type="ChEBI" id="CHEBI:246422"/>
        <dbReference type="EC" id="3.6.1.23"/>
    </reaction>
</comment>
<comment type="cofactor">
    <cofactor evidence="1">
        <name>Mg(2+)</name>
        <dbReference type="ChEBI" id="CHEBI:18420"/>
    </cofactor>
</comment>
<comment type="pathway">
    <text evidence="1">Pyrimidine metabolism; dUMP biosynthesis; dUMP from dCTP (dUTP route): step 2/2.</text>
</comment>
<comment type="similarity">
    <text evidence="1">Belongs to the dUTPase family.</text>
</comment>
<organism>
    <name type="scientific">Shigella boydii serotype 18 (strain CDC 3083-94 / BS512)</name>
    <dbReference type="NCBI Taxonomy" id="344609"/>
    <lineage>
        <taxon>Bacteria</taxon>
        <taxon>Pseudomonadati</taxon>
        <taxon>Pseudomonadota</taxon>
        <taxon>Gammaproteobacteria</taxon>
        <taxon>Enterobacterales</taxon>
        <taxon>Enterobacteriaceae</taxon>
        <taxon>Shigella</taxon>
    </lineage>
</organism>
<keyword id="KW-0378">Hydrolase</keyword>
<keyword id="KW-0460">Magnesium</keyword>
<keyword id="KW-0479">Metal-binding</keyword>
<keyword id="KW-0546">Nucleotide metabolism</keyword>
<keyword id="KW-1185">Reference proteome</keyword>
<sequence>MKKIDVKILDPRVGKEFPLPTYATSGSAGLDLRACLDDAVELAPGDTTLVPTGLAIHIADPSLAAMMLPRSGLGHKHGIVLGNLVGLIDSDYQGQLMISVWNRGQDSFTIQPGERIAQMIFVPVVQAEFNLVEDFDATDRGEGGFGHSGRQ</sequence>
<proteinExistence type="inferred from homology"/>
<name>DUT_SHIB3</name>
<reference key="1">
    <citation type="submission" date="2008-05" db="EMBL/GenBank/DDBJ databases">
        <title>Complete sequence of Shigella boydii serotype 18 strain BS512.</title>
        <authorList>
            <person name="Rasko D.A."/>
            <person name="Rosovitz M."/>
            <person name="Maurelli A.T."/>
            <person name="Myers G."/>
            <person name="Seshadri R."/>
            <person name="Cer R."/>
            <person name="Jiang L."/>
            <person name="Ravel J."/>
            <person name="Sebastian Y."/>
        </authorList>
    </citation>
    <scope>NUCLEOTIDE SEQUENCE [LARGE SCALE GENOMIC DNA]</scope>
    <source>
        <strain>CDC 3083-94 / BS512</strain>
    </source>
</reference>
<accession>B2TTV4</accession>